<keyword id="KW-0521">NADP</keyword>
<keyword id="KW-0560">Oxidoreductase</keyword>
<keyword id="KW-0627">Porphyrin biosynthesis</keyword>
<reference key="1">
    <citation type="journal article" date="2004" name="Nat. Biotechnol.">
        <title>The genome sequence of the capnophilic rumen bacterium Mannheimia succiniciproducens.</title>
        <authorList>
            <person name="Hong S.H."/>
            <person name="Kim J.S."/>
            <person name="Lee S.Y."/>
            <person name="In Y.H."/>
            <person name="Choi S.S."/>
            <person name="Rih J.-K."/>
            <person name="Kim C.H."/>
            <person name="Jeong H."/>
            <person name="Hur C.G."/>
            <person name="Kim J.J."/>
        </authorList>
    </citation>
    <scope>NUCLEOTIDE SEQUENCE [LARGE SCALE GENOMIC DNA]</scope>
    <source>
        <strain>KCTC 0769BP / MBEL55E</strain>
    </source>
</reference>
<comment type="function">
    <text evidence="1">Catalyzes the NADPH-dependent reduction of glutamyl-tRNA(Glu) to glutamate 1-semialdehyde (GSA).</text>
</comment>
<comment type="catalytic activity">
    <reaction evidence="1">
        <text>(S)-4-amino-5-oxopentanoate + tRNA(Glu) + NADP(+) = L-glutamyl-tRNA(Glu) + NADPH + H(+)</text>
        <dbReference type="Rhea" id="RHEA:12344"/>
        <dbReference type="Rhea" id="RHEA-COMP:9663"/>
        <dbReference type="Rhea" id="RHEA-COMP:9680"/>
        <dbReference type="ChEBI" id="CHEBI:15378"/>
        <dbReference type="ChEBI" id="CHEBI:57501"/>
        <dbReference type="ChEBI" id="CHEBI:57783"/>
        <dbReference type="ChEBI" id="CHEBI:58349"/>
        <dbReference type="ChEBI" id="CHEBI:78442"/>
        <dbReference type="ChEBI" id="CHEBI:78520"/>
        <dbReference type="EC" id="1.2.1.70"/>
    </reaction>
</comment>
<comment type="pathway">
    <text evidence="1">Porphyrin-containing compound metabolism; protoporphyrin-IX biosynthesis; 5-aminolevulinate from L-glutamyl-tRNA(Glu): step 1/2.</text>
</comment>
<comment type="subunit">
    <text evidence="1">Homodimer.</text>
</comment>
<comment type="domain">
    <text evidence="1">Possesses an unusual extended V-shaped dimeric structure with each monomer consisting of three distinct domains arranged along a curved 'spinal' alpha-helix. The N-terminal catalytic domain specifically recognizes the glutamate moiety of the substrate. The second domain is the NADPH-binding domain, and the third C-terminal domain is responsible for dimerization.</text>
</comment>
<comment type="miscellaneous">
    <text evidence="1">During catalysis, the active site Cys acts as a nucleophile attacking the alpha-carbonyl group of tRNA-bound glutamate with the formation of a thioester intermediate between enzyme and glutamate, and the concomitant release of tRNA(Glu). The thioester intermediate is finally reduced by direct hydride transfer from NADPH, to form the product GSA.</text>
</comment>
<comment type="similarity">
    <text evidence="1">Belongs to the glutamyl-tRNA reductase family.</text>
</comment>
<name>HEM1_MANSM</name>
<evidence type="ECO:0000255" key="1">
    <source>
        <dbReference type="HAMAP-Rule" id="MF_00087"/>
    </source>
</evidence>
<organism>
    <name type="scientific">Mannheimia succiniciproducens (strain KCTC 0769BP / MBEL55E)</name>
    <dbReference type="NCBI Taxonomy" id="221988"/>
    <lineage>
        <taxon>Bacteria</taxon>
        <taxon>Pseudomonadati</taxon>
        <taxon>Pseudomonadota</taxon>
        <taxon>Gammaproteobacteria</taxon>
        <taxon>Pasteurellales</taxon>
        <taxon>Pasteurellaceae</taxon>
        <taxon>Basfia</taxon>
    </lineage>
</organism>
<protein>
    <recommendedName>
        <fullName evidence="1">Glutamyl-tRNA reductase</fullName>
        <shortName evidence="1">GluTR</shortName>
        <ecNumber evidence="1">1.2.1.70</ecNumber>
    </recommendedName>
</protein>
<gene>
    <name evidence="1" type="primary">hemA</name>
    <name type="ordered locus">MS1324</name>
</gene>
<proteinExistence type="inferred from homology"/>
<accession>Q65SX9</accession>
<feature type="chain" id="PRO_0000114038" description="Glutamyl-tRNA reductase">
    <location>
        <begin position="1"/>
        <end position="444"/>
    </location>
</feature>
<feature type="active site" description="Nucleophile" evidence="1">
    <location>
        <position position="50"/>
    </location>
</feature>
<feature type="binding site" evidence="1">
    <location>
        <begin position="49"/>
        <end position="52"/>
    </location>
    <ligand>
        <name>substrate</name>
    </ligand>
</feature>
<feature type="binding site" evidence="1">
    <location>
        <position position="117"/>
    </location>
    <ligand>
        <name>substrate</name>
    </ligand>
</feature>
<feature type="binding site" evidence="1">
    <location>
        <begin position="122"/>
        <end position="124"/>
    </location>
    <ligand>
        <name>substrate</name>
    </ligand>
</feature>
<feature type="binding site" evidence="1">
    <location>
        <position position="128"/>
    </location>
    <ligand>
        <name>substrate</name>
    </ligand>
</feature>
<feature type="binding site" evidence="1">
    <location>
        <begin position="202"/>
        <end position="207"/>
    </location>
    <ligand>
        <name>NADP(+)</name>
        <dbReference type="ChEBI" id="CHEBI:58349"/>
    </ligand>
</feature>
<feature type="site" description="Important for activity" evidence="1">
    <location>
        <position position="107"/>
    </location>
</feature>
<sequence>MTILVLGINHKTASVALREKVAFSPEKRDLAFQQIAQSELAQSEVILSTCNRTEIYLHNKHISPEADQENQRWLEQCIQWFADVHQLDVDELRNCLYIKQNQSAVNHLMRVSCGLDSLVLGEPQILGQVKQAYQYSEDYCQAQHMPMSSEFSRLFQKTFSVAKRVRTETNIGNSAVSVAYAACSLARQIFEGLKDLNILLVGAGETIELVARHLLRHGVKKLMISNRTLARAELLVEKLEHNKYIQVLSLQQLQDGLNQADIVISSTGSPIVLITAEMVKQAQQKRRNAPMLIVDIAVPRDVDERVEKLDGVYHYTVDDLHSIIQRNLSEREKASKEAETIIDAEASDFFEWMKVHQFSNLIRTYRESAEQIRQDLLEKAVQAIGQNEDPETVLQELSYKLMNKLIHSPTQAMQAMMKQGSIQGLRSFSSALGIADKKERNPQK</sequence>
<dbReference type="EC" id="1.2.1.70" evidence="1"/>
<dbReference type="EMBL" id="AE016827">
    <property type="protein sequence ID" value="AAU37931.1"/>
    <property type="molecule type" value="Genomic_DNA"/>
</dbReference>
<dbReference type="RefSeq" id="WP_011200498.1">
    <property type="nucleotide sequence ID" value="NC_006300.1"/>
</dbReference>
<dbReference type="SMR" id="Q65SX9"/>
<dbReference type="STRING" id="221988.MS1324"/>
<dbReference type="KEGG" id="msu:MS1324"/>
<dbReference type="eggNOG" id="COG0373">
    <property type="taxonomic scope" value="Bacteria"/>
</dbReference>
<dbReference type="HOGENOM" id="CLU_035113_2_2_6"/>
<dbReference type="OrthoDB" id="110209at2"/>
<dbReference type="UniPathway" id="UPA00251">
    <property type="reaction ID" value="UER00316"/>
</dbReference>
<dbReference type="Proteomes" id="UP000000607">
    <property type="component" value="Chromosome"/>
</dbReference>
<dbReference type="GO" id="GO:0008883">
    <property type="term" value="F:glutamyl-tRNA reductase activity"/>
    <property type="evidence" value="ECO:0007669"/>
    <property type="project" value="UniProtKB-UniRule"/>
</dbReference>
<dbReference type="GO" id="GO:0050661">
    <property type="term" value="F:NADP binding"/>
    <property type="evidence" value="ECO:0007669"/>
    <property type="project" value="InterPro"/>
</dbReference>
<dbReference type="GO" id="GO:0019353">
    <property type="term" value="P:protoporphyrinogen IX biosynthetic process from glutamate"/>
    <property type="evidence" value="ECO:0007669"/>
    <property type="project" value="TreeGrafter"/>
</dbReference>
<dbReference type="CDD" id="cd05213">
    <property type="entry name" value="NAD_bind_Glutamyl_tRNA_reduct"/>
    <property type="match status" value="1"/>
</dbReference>
<dbReference type="FunFam" id="3.30.460.30:FF:000001">
    <property type="entry name" value="Glutamyl-tRNA reductase"/>
    <property type="match status" value="1"/>
</dbReference>
<dbReference type="FunFam" id="3.40.50.720:FF:000031">
    <property type="entry name" value="Glutamyl-tRNA reductase"/>
    <property type="match status" value="1"/>
</dbReference>
<dbReference type="Gene3D" id="3.30.460.30">
    <property type="entry name" value="Glutamyl-tRNA reductase, N-terminal domain"/>
    <property type="match status" value="1"/>
</dbReference>
<dbReference type="Gene3D" id="3.40.50.720">
    <property type="entry name" value="NAD(P)-binding Rossmann-like Domain"/>
    <property type="match status" value="1"/>
</dbReference>
<dbReference type="HAMAP" id="MF_00087">
    <property type="entry name" value="Glu_tRNA_reductase"/>
    <property type="match status" value="1"/>
</dbReference>
<dbReference type="InterPro" id="IPR000343">
    <property type="entry name" value="4pyrrol_synth_GluRdtase"/>
</dbReference>
<dbReference type="InterPro" id="IPR015896">
    <property type="entry name" value="4pyrrol_synth_GluRdtase_dimer"/>
</dbReference>
<dbReference type="InterPro" id="IPR015895">
    <property type="entry name" value="4pyrrol_synth_GluRdtase_N"/>
</dbReference>
<dbReference type="InterPro" id="IPR018214">
    <property type="entry name" value="GluRdtase_CS"/>
</dbReference>
<dbReference type="InterPro" id="IPR036453">
    <property type="entry name" value="GluRdtase_dimer_dom_sf"/>
</dbReference>
<dbReference type="InterPro" id="IPR036343">
    <property type="entry name" value="GluRdtase_N_sf"/>
</dbReference>
<dbReference type="InterPro" id="IPR036291">
    <property type="entry name" value="NAD(P)-bd_dom_sf"/>
</dbReference>
<dbReference type="InterPro" id="IPR006151">
    <property type="entry name" value="Shikm_DH/Glu-tRNA_Rdtase"/>
</dbReference>
<dbReference type="NCBIfam" id="TIGR01035">
    <property type="entry name" value="hemA"/>
    <property type="match status" value="1"/>
</dbReference>
<dbReference type="PANTHER" id="PTHR43013">
    <property type="entry name" value="GLUTAMYL-TRNA REDUCTASE"/>
    <property type="match status" value="1"/>
</dbReference>
<dbReference type="PANTHER" id="PTHR43013:SF1">
    <property type="entry name" value="GLUTAMYL-TRNA REDUCTASE"/>
    <property type="match status" value="1"/>
</dbReference>
<dbReference type="Pfam" id="PF00745">
    <property type="entry name" value="GlutR_dimer"/>
    <property type="match status" value="1"/>
</dbReference>
<dbReference type="Pfam" id="PF05201">
    <property type="entry name" value="GlutR_N"/>
    <property type="match status" value="1"/>
</dbReference>
<dbReference type="Pfam" id="PF01488">
    <property type="entry name" value="Shikimate_DH"/>
    <property type="match status" value="1"/>
</dbReference>
<dbReference type="PIRSF" id="PIRSF000445">
    <property type="entry name" value="4pyrrol_synth_GluRdtase"/>
    <property type="match status" value="1"/>
</dbReference>
<dbReference type="SUPFAM" id="SSF69742">
    <property type="entry name" value="Glutamyl tRNA-reductase catalytic, N-terminal domain"/>
    <property type="match status" value="1"/>
</dbReference>
<dbReference type="SUPFAM" id="SSF69075">
    <property type="entry name" value="Glutamyl tRNA-reductase dimerization domain"/>
    <property type="match status" value="1"/>
</dbReference>
<dbReference type="SUPFAM" id="SSF51735">
    <property type="entry name" value="NAD(P)-binding Rossmann-fold domains"/>
    <property type="match status" value="1"/>
</dbReference>
<dbReference type="PROSITE" id="PS00747">
    <property type="entry name" value="GLUTR"/>
    <property type="match status" value="1"/>
</dbReference>